<keyword id="KW-1185">Reference proteome</keyword>
<keyword id="KW-0687">Ribonucleoprotein</keyword>
<keyword id="KW-0689">Ribosomal protein</keyword>
<keyword id="KW-0694">RNA-binding</keyword>
<keyword id="KW-0699">rRNA-binding</keyword>
<dbReference type="EMBL" id="AM494475">
    <property type="protein sequence ID" value="CAM79615.1"/>
    <property type="molecule type" value="Genomic_DNA"/>
</dbReference>
<dbReference type="RefSeq" id="WP_011944536.1">
    <property type="nucleotide sequence ID" value="NC_009488.1"/>
</dbReference>
<dbReference type="SMR" id="A5CCY6"/>
<dbReference type="KEGG" id="ots:OTBS_0549"/>
<dbReference type="eggNOG" id="COG0238">
    <property type="taxonomic scope" value="Bacteria"/>
</dbReference>
<dbReference type="HOGENOM" id="CLU_148710_2_1_5"/>
<dbReference type="Proteomes" id="UP000001565">
    <property type="component" value="Chromosome"/>
</dbReference>
<dbReference type="GO" id="GO:0022627">
    <property type="term" value="C:cytosolic small ribosomal subunit"/>
    <property type="evidence" value="ECO:0007669"/>
    <property type="project" value="TreeGrafter"/>
</dbReference>
<dbReference type="GO" id="GO:0070181">
    <property type="term" value="F:small ribosomal subunit rRNA binding"/>
    <property type="evidence" value="ECO:0007669"/>
    <property type="project" value="TreeGrafter"/>
</dbReference>
<dbReference type="GO" id="GO:0003735">
    <property type="term" value="F:structural constituent of ribosome"/>
    <property type="evidence" value="ECO:0007669"/>
    <property type="project" value="InterPro"/>
</dbReference>
<dbReference type="GO" id="GO:0006412">
    <property type="term" value="P:translation"/>
    <property type="evidence" value="ECO:0007669"/>
    <property type="project" value="UniProtKB-UniRule"/>
</dbReference>
<dbReference type="Gene3D" id="4.10.640.10">
    <property type="entry name" value="Ribosomal protein S18"/>
    <property type="match status" value="1"/>
</dbReference>
<dbReference type="HAMAP" id="MF_00270">
    <property type="entry name" value="Ribosomal_bS18"/>
    <property type="match status" value="1"/>
</dbReference>
<dbReference type="InterPro" id="IPR001648">
    <property type="entry name" value="Ribosomal_bS18"/>
</dbReference>
<dbReference type="InterPro" id="IPR036870">
    <property type="entry name" value="Ribosomal_bS18_sf"/>
</dbReference>
<dbReference type="NCBIfam" id="TIGR00165">
    <property type="entry name" value="S18"/>
    <property type="match status" value="1"/>
</dbReference>
<dbReference type="PANTHER" id="PTHR13479">
    <property type="entry name" value="30S RIBOSOMAL PROTEIN S18"/>
    <property type="match status" value="1"/>
</dbReference>
<dbReference type="PANTHER" id="PTHR13479:SF40">
    <property type="entry name" value="SMALL RIBOSOMAL SUBUNIT PROTEIN BS18M"/>
    <property type="match status" value="1"/>
</dbReference>
<dbReference type="Pfam" id="PF01084">
    <property type="entry name" value="Ribosomal_S18"/>
    <property type="match status" value="1"/>
</dbReference>
<dbReference type="PRINTS" id="PR00974">
    <property type="entry name" value="RIBOSOMALS18"/>
</dbReference>
<dbReference type="SUPFAM" id="SSF46911">
    <property type="entry name" value="Ribosomal protein S18"/>
    <property type="match status" value="1"/>
</dbReference>
<sequence length="102" mass="11558">MTENIDTANIDAIKNKTLKRTANRANKEVFFRRRKGCPLSAPDGTAPIITYKDPDLLSKFISECGRVLPARVTNVCRSKQRELTKAIKIARELALLPFVYHQ</sequence>
<organism>
    <name type="scientific">Orientia tsutsugamushi (strain Boryong)</name>
    <name type="common">Rickettsia tsutsugamushi</name>
    <dbReference type="NCBI Taxonomy" id="357244"/>
    <lineage>
        <taxon>Bacteria</taxon>
        <taxon>Pseudomonadati</taxon>
        <taxon>Pseudomonadota</taxon>
        <taxon>Alphaproteobacteria</taxon>
        <taxon>Rickettsiales</taxon>
        <taxon>Rickettsiaceae</taxon>
        <taxon>Rickettsieae</taxon>
        <taxon>Orientia</taxon>
    </lineage>
</organism>
<comment type="function">
    <text evidence="1">Binds as a heterodimer with protein bS6 to the central domain of the 16S rRNA, where it helps stabilize the platform of the 30S subunit.</text>
</comment>
<comment type="subunit">
    <text evidence="1">Part of the 30S ribosomal subunit. Forms a tight heterodimer with protein bS6.</text>
</comment>
<comment type="similarity">
    <text evidence="1">Belongs to the bacterial ribosomal protein bS18 family.</text>
</comment>
<name>RS18_ORITB</name>
<evidence type="ECO:0000255" key="1">
    <source>
        <dbReference type="HAMAP-Rule" id="MF_00270"/>
    </source>
</evidence>
<evidence type="ECO:0000305" key="2"/>
<protein>
    <recommendedName>
        <fullName evidence="1">Small ribosomal subunit protein bS18</fullName>
    </recommendedName>
    <alternativeName>
        <fullName evidence="2">30S ribosomal protein S18</fullName>
    </alternativeName>
</protein>
<accession>A5CCY6</accession>
<proteinExistence type="inferred from homology"/>
<feature type="chain" id="PRO_0000345520" description="Small ribosomal subunit protein bS18">
    <location>
        <begin position="1"/>
        <end position="102"/>
    </location>
</feature>
<reference key="1">
    <citation type="journal article" date="2007" name="Proc. Natl. Acad. Sci. U.S.A.">
        <title>The Orientia tsutsugamushi genome reveals massive proliferation of conjugative type IV secretion system and host-cell interaction genes.</title>
        <authorList>
            <person name="Cho N.-H."/>
            <person name="Kim H.-R."/>
            <person name="Lee J.-H."/>
            <person name="Kim S.-Y."/>
            <person name="Kim J."/>
            <person name="Cha S."/>
            <person name="Kim S.-Y."/>
            <person name="Darby A.C."/>
            <person name="Fuxelius H.-H."/>
            <person name="Yin J."/>
            <person name="Kim J.H."/>
            <person name="Kim J."/>
            <person name="Lee S.J."/>
            <person name="Koh Y.-S."/>
            <person name="Jang W.-J."/>
            <person name="Park K.-H."/>
            <person name="Andersson S.G.E."/>
            <person name="Choi M.-S."/>
            <person name="Kim I.-S."/>
        </authorList>
    </citation>
    <scope>NUCLEOTIDE SEQUENCE [LARGE SCALE GENOMIC DNA]</scope>
    <source>
        <strain>Boryong</strain>
    </source>
</reference>
<gene>
    <name evidence="1" type="primary">rpsR</name>
    <name type="ordered locus">OTBS_0549</name>
</gene>